<dbReference type="EC" id="2.7.1.60" evidence="1"/>
<dbReference type="EMBL" id="CP000247">
    <property type="protein sequence ID" value="ABG71285.1"/>
    <property type="molecule type" value="Genomic_DNA"/>
</dbReference>
<dbReference type="RefSeq" id="WP_000209059.1">
    <property type="nucleotide sequence ID" value="NC_008253.1"/>
</dbReference>
<dbReference type="SMR" id="Q0TCP4"/>
<dbReference type="KEGG" id="ecp:ECP_3305"/>
<dbReference type="HOGENOM" id="CLU_036604_0_4_6"/>
<dbReference type="UniPathway" id="UPA00629">
    <property type="reaction ID" value="UER00681"/>
</dbReference>
<dbReference type="Proteomes" id="UP000009182">
    <property type="component" value="Chromosome"/>
</dbReference>
<dbReference type="GO" id="GO:0005524">
    <property type="term" value="F:ATP binding"/>
    <property type="evidence" value="ECO:0007669"/>
    <property type="project" value="UniProtKB-UniRule"/>
</dbReference>
<dbReference type="GO" id="GO:0009384">
    <property type="term" value="F:N-acylmannosamine kinase activity"/>
    <property type="evidence" value="ECO:0007669"/>
    <property type="project" value="UniProtKB-UniRule"/>
</dbReference>
<dbReference type="GO" id="GO:0008270">
    <property type="term" value="F:zinc ion binding"/>
    <property type="evidence" value="ECO:0007669"/>
    <property type="project" value="UniProtKB-UniRule"/>
</dbReference>
<dbReference type="GO" id="GO:0019262">
    <property type="term" value="P:N-acetylneuraminate catabolic process"/>
    <property type="evidence" value="ECO:0007669"/>
    <property type="project" value="UniProtKB-UniRule"/>
</dbReference>
<dbReference type="CDD" id="cd24069">
    <property type="entry name" value="ASKHA_NBD_ROK_EcNanK-like"/>
    <property type="match status" value="1"/>
</dbReference>
<dbReference type="FunFam" id="3.30.420.40:FF:000062">
    <property type="entry name" value="N-acetylmannosamine kinase"/>
    <property type="match status" value="1"/>
</dbReference>
<dbReference type="FunFam" id="3.30.420.40:FF:000063">
    <property type="entry name" value="N-acetylmannosamine kinase"/>
    <property type="match status" value="1"/>
</dbReference>
<dbReference type="Gene3D" id="3.30.420.40">
    <property type="match status" value="2"/>
</dbReference>
<dbReference type="HAMAP" id="MF_01234">
    <property type="entry name" value="ManNAc_kinase"/>
    <property type="match status" value="1"/>
</dbReference>
<dbReference type="InterPro" id="IPR043129">
    <property type="entry name" value="ATPase_NBD"/>
</dbReference>
<dbReference type="InterPro" id="IPR023945">
    <property type="entry name" value="ManNAc_kinase_bac"/>
</dbReference>
<dbReference type="InterPro" id="IPR000600">
    <property type="entry name" value="ROK"/>
</dbReference>
<dbReference type="InterPro" id="IPR049874">
    <property type="entry name" value="ROK_cs"/>
</dbReference>
<dbReference type="NCBIfam" id="NF047821">
    <property type="entry name" value="NactlManKinNanK"/>
    <property type="match status" value="1"/>
</dbReference>
<dbReference type="NCBIfam" id="NF003461">
    <property type="entry name" value="PRK05082.1"/>
    <property type="match status" value="1"/>
</dbReference>
<dbReference type="PANTHER" id="PTHR18964:SF169">
    <property type="entry name" value="N-ACETYLMANNOSAMINE KINASE"/>
    <property type="match status" value="1"/>
</dbReference>
<dbReference type="PANTHER" id="PTHR18964">
    <property type="entry name" value="ROK (REPRESSOR, ORF, KINASE) FAMILY"/>
    <property type="match status" value="1"/>
</dbReference>
<dbReference type="Pfam" id="PF00480">
    <property type="entry name" value="ROK"/>
    <property type="match status" value="1"/>
</dbReference>
<dbReference type="SUPFAM" id="SSF53067">
    <property type="entry name" value="Actin-like ATPase domain"/>
    <property type="match status" value="1"/>
</dbReference>
<dbReference type="PROSITE" id="PS01125">
    <property type="entry name" value="ROK"/>
    <property type="match status" value="1"/>
</dbReference>
<protein>
    <recommendedName>
        <fullName evidence="1">N-acetylmannosamine kinase</fullName>
        <ecNumber evidence="1">2.7.1.60</ecNumber>
    </recommendedName>
    <alternativeName>
        <fullName evidence="1">ManNAc kinase</fullName>
    </alternativeName>
    <alternativeName>
        <fullName evidence="1">N-acetyl-D-mannosamine kinase</fullName>
    </alternativeName>
</protein>
<feature type="chain" id="PRO_0000301458" description="N-acetylmannosamine kinase">
    <location>
        <begin position="1"/>
        <end position="291"/>
    </location>
</feature>
<feature type="binding site" evidence="1">
    <location>
        <begin position="5"/>
        <end position="12"/>
    </location>
    <ligand>
        <name>ATP</name>
        <dbReference type="ChEBI" id="CHEBI:30616"/>
    </ligand>
</feature>
<feature type="binding site" evidence="1">
    <location>
        <begin position="132"/>
        <end position="139"/>
    </location>
    <ligand>
        <name>ATP</name>
        <dbReference type="ChEBI" id="CHEBI:30616"/>
    </ligand>
</feature>
<feature type="binding site" evidence="1">
    <location>
        <position position="156"/>
    </location>
    <ligand>
        <name>Zn(2+)</name>
        <dbReference type="ChEBI" id="CHEBI:29105"/>
    </ligand>
</feature>
<feature type="binding site" evidence="1">
    <location>
        <position position="166"/>
    </location>
    <ligand>
        <name>Zn(2+)</name>
        <dbReference type="ChEBI" id="CHEBI:29105"/>
    </ligand>
</feature>
<feature type="binding site" evidence="1">
    <location>
        <position position="168"/>
    </location>
    <ligand>
        <name>Zn(2+)</name>
        <dbReference type="ChEBI" id="CHEBI:29105"/>
    </ligand>
</feature>
<feature type="binding site" evidence="1">
    <location>
        <position position="173"/>
    </location>
    <ligand>
        <name>Zn(2+)</name>
        <dbReference type="ChEBI" id="CHEBI:29105"/>
    </ligand>
</feature>
<organism>
    <name type="scientific">Escherichia coli O6:K15:H31 (strain 536 / UPEC)</name>
    <dbReference type="NCBI Taxonomy" id="362663"/>
    <lineage>
        <taxon>Bacteria</taxon>
        <taxon>Pseudomonadati</taxon>
        <taxon>Pseudomonadota</taxon>
        <taxon>Gammaproteobacteria</taxon>
        <taxon>Enterobacterales</taxon>
        <taxon>Enterobacteriaceae</taxon>
        <taxon>Escherichia</taxon>
    </lineage>
</organism>
<comment type="function">
    <text evidence="1">Catalyzes the phosphorylation of N-acetylmannosamine (ManNAc) to ManNAc-6-P.</text>
</comment>
<comment type="catalytic activity">
    <reaction evidence="1">
        <text>an N-acyl-D-mannosamine + ATP = an N-acyl-D-mannosamine 6-phosphate + ADP + H(+)</text>
        <dbReference type="Rhea" id="RHEA:23832"/>
        <dbReference type="ChEBI" id="CHEBI:15378"/>
        <dbReference type="ChEBI" id="CHEBI:16062"/>
        <dbReference type="ChEBI" id="CHEBI:30616"/>
        <dbReference type="ChEBI" id="CHEBI:57666"/>
        <dbReference type="ChEBI" id="CHEBI:456216"/>
        <dbReference type="EC" id="2.7.1.60"/>
    </reaction>
</comment>
<comment type="pathway">
    <text evidence="1">Amino-sugar metabolism; N-acetylneuraminate degradation; D-fructose 6-phosphate from N-acetylneuraminate: step 2/5.</text>
</comment>
<comment type="subunit">
    <text evidence="1">Homodimer.</text>
</comment>
<comment type="similarity">
    <text evidence="1">Belongs to the ROK (NagC/XylR) family. NanK subfamily.</text>
</comment>
<evidence type="ECO:0000255" key="1">
    <source>
        <dbReference type="HAMAP-Rule" id="MF_01234"/>
    </source>
</evidence>
<name>NANK_ECOL5</name>
<keyword id="KW-0067">ATP-binding</keyword>
<keyword id="KW-0119">Carbohydrate metabolism</keyword>
<keyword id="KW-0418">Kinase</keyword>
<keyword id="KW-0479">Metal-binding</keyword>
<keyword id="KW-0547">Nucleotide-binding</keyword>
<keyword id="KW-0808">Transferase</keyword>
<keyword id="KW-0862">Zinc</keyword>
<accession>Q0TCP4</accession>
<reference key="1">
    <citation type="journal article" date="2006" name="Mol. Microbiol.">
        <title>Role of pathogenicity island-associated integrases in the genome plasticity of uropathogenic Escherichia coli strain 536.</title>
        <authorList>
            <person name="Hochhut B."/>
            <person name="Wilde C."/>
            <person name="Balling G."/>
            <person name="Middendorf B."/>
            <person name="Dobrindt U."/>
            <person name="Brzuszkiewicz E."/>
            <person name="Gottschalk G."/>
            <person name="Carniel E."/>
            <person name="Hacker J."/>
        </authorList>
    </citation>
    <scope>NUCLEOTIDE SEQUENCE [LARGE SCALE GENOMIC DNA]</scope>
    <source>
        <strain>536 / UPEC</strain>
    </source>
</reference>
<gene>
    <name evidence="1" type="primary">nanK</name>
    <name type="ordered locus">ECP_3305</name>
</gene>
<proteinExistence type="inferred from homology"/>
<sequence>MTTLAIDIGGTKLAAALIGADGQIRDRRELPTPASQTPQALRDALSALVSPLQAHAQRVAIASTGIIRDGSLLALNPHNLGGLLHFPLVKTLEQLTNLPTIAINDAQAAAWAEYQALDGDITDMVFITVSTGVGGGVVSGGKLRTGPGGLAGHIGHTLADPHGPVCGCGRTGCVEAIASGRGIATAAQGELAGANAKTIFTRAGQGDEQAQQLIHRSARTLARLIADIKATTDCQCVVVGGSVGLAEGYLALVETYLAQEPAAFHVDLLAAHYRHDAGLLGAALLAQGEKL</sequence>